<accession>Q32KU3</accession>
<keyword id="KW-1185">Reference proteome</keyword>
<keyword id="KW-0677">Repeat</keyword>
<dbReference type="EMBL" id="BC109927">
    <property type="protein sequence ID" value="AAI09928.1"/>
    <property type="molecule type" value="mRNA"/>
</dbReference>
<dbReference type="RefSeq" id="NP_001069896.1">
    <property type="nucleotide sequence ID" value="NM_001076428.1"/>
</dbReference>
<dbReference type="RefSeq" id="XP_005212735.1">
    <property type="nucleotide sequence ID" value="XM_005212678.3"/>
</dbReference>
<dbReference type="SMR" id="Q32KU3"/>
<dbReference type="FunCoup" id="Q32KU3">
    <property type="interactions" value="35"/>
</dbReference>
<dbReference type="PaxDb" id="9913-ENSBTAP00000033055"/>
<dbReference type="GeneID" id="616607"/>
<dbReference type="KEGG" id="bta:616607"/>
<dbReference type="CTD" id="729967"/>
<dbReference type="eggNOG" id="ENOG502S53V">
    <property type="taxonomic scope" value="Eukaryota"/>
</dbReference>
<dbReference type="HOGENOM" id="CLU_032017_5_5_1"/>
<dbReference type="InParanoid" id="Q32KU3"/>
<dbReference type="OrthoDB" id="437960at2759"/>
<dbReference type="TreeFam" id="TF352715"/>
<dbReference type="Proteomes" id="UP000009136">
    <property type="component" value="Unplaced"/>
</dbReference>
<dbReference type="Gene3D" id="2.20.110.10">
    <property type="entry name" value="Histone H3 K4-specific methyltransferase SET7/9 N-terminal domain"/>
    <property type="match status" value="1"/>
</dbReference>
<dbReference type="InterPro" id="IPR003409">
    <property type="entry name" value="MORN"/>
</dbReference>
<dbReference type="InterPro" id="IPR052849">
    <property type="entry name" value="MORN_repeat_protein"/>
</dbReference>
<dbReference type="PANTHER" id="PTHR46917">
    <property type="entry name" value="MORN REPEAT-CONTAINING PROTEIN 2"/>
    <property type="match status" value="1"/>
</dbReference>
<dbReference type="PANTHER" id="PTHR46917:SF1">
    <property type="entry name" value="MORN REPEAT-CONTAINING PROTEIN 2"/>
    <property type="match status" value="1"/>
</dbReference>
<dbReference type="Pfam" id="PF02493">
    <property type="entry name" value="MORN"/>
    <property type="match status" value="2"/>
</dbReference>
<dbReference type="SMART" id="SM00698">
    <property type="entry name" value="MORN"/>
    <property type="match status" value="2"/>
</dbReference>
<dbReference type="SUPFAM" id="SSF82185">
    <property type="entry name" value="Histone H3 K4-specific methyltransferase SET7/9 N-terminal domain"/>
    <property type="match status" value="1"/>
</dbReference>
<gene>
    <name type="primary">MORN2</name>
</gene>
<protein>
    <recommendedName>
        <fullName>MORN repeat-containing protein 2</fullName>
    </recommendedName>
</protein>
<reference key="1">
    <citation type="submission" date="2005-11" db="EMBL/GenBank/DDBJ databases">
        <authorList>
            <consortium name="NIH - Mammalian Gene Collection (MGC) project"/>
        </authorList>
    </citation>
    <scope>NUCLEOTIDE SEQUENCE [LARGE SCALE MRNA]</scope>
    <source>
        <strain>Crossbred X Angus</strain>
        <tissue>Liver</tissue>
    </source>
</reference>
<feature type="chain" id="PRO_0000247456" description="MORN repeat-containing protein 2">
    <location>
        <begin position="1"/>
        <end position="79"/>
    </location>
</feature>
<feature type="repeat" description="MORN 1">
    <location>
        <begin position="15"/>
        <end position="37"/>
    </location>
</feature>
<feature type="repeat" description="MORN 2">
    <location>
        <begin position="38"/>
        <end position="60"/>
    </location>
</feature>
<name>MORN2_BOVIN</name>
<organism>
    <name type="scientific">Bos taurus</name>
    <name type="common">Bovine</name>
    <dbReference type="NCBI Taxonomy" id="9913"/>
    <lineage>
        <taxon>Eukaryota</taxon>
        <taxon>Metazoa</taxon>
        <taxon>Chordata</taxon>
        <taxon>Craniata</taxon>
        <taxon>Vertebrata</taxon>
        <taxon>Euteleostomi</taxon>
        <taxon>Mammalia</taxon>
        <taxon>Eutheria</taxon>
        <taxon>Laurasiatheria</taxon>
        <taxon>Artiodactyla</taxon>
        <taxon>Ruminantia</taxon>
        <taxon>Pecora</taxon>
        <taxon>Bovidae</taxon>
        <taxon>Bovinae</taxon>
        <taxon>Bos</taxon>
    </lineage>
</organism>
<sequence length="79" mass="8947">MNGFGRLEHFSGAIYEGHFKDNMFHGLGTYTFPNGAKYTGNFNENRVEGEGQYTDIQGLEWCGNFHFTAAPGLRLKLHM</sequence>
<proteinExistence type="predicted"/>